<sequence length="297" mass="33185">MSEMESDILRAGWEAWRRNPVTAVPFVLHGLSVIAVSIATLLSAIYAIMPELPAAILSGDFGDEAFKQMFGEFLKRCLGNIELLGVTFVFGLVIVAALAALFKAWWIKLCYDALEGKAILSTAFHHAKSLFVPLFKFELILTLLIGIAFIPLINLGLDFFRNIHMLTKEAALYYVISFMIWSAFLGIFAITIQFLFTFVPYAIVIDLKGTLSGIRRGVMVLRHNLVDTIIMWLLVGLAGMALQVAAYPFRFFGFWGTLAGTLVAVILGWVAVMPITTCWWVELYRRRSKTLNSFPNG</sequence>
<reference key="1">
    <citation type="journal article" date="1997" name="Nature">
        <title>The complete genome sequence of the hyperthermophilic, sulphate-reducing archaeon Archaeoglobus fulgidus.</title>
        <authorList>
            <person name="Klenk H.-P."/>
            <person name="Clayton R.A."/>
            <person name="Tomb J.-F."/>
            <person name="White O."/>
            <person name="Nelson K.E."/>
            <person name="Ketchum K.A."/>
            <person name="Dodson R.J."/>
            <person name="Gwinn M.L."/>
            <person name="Hickey E.K."/>
            <person name="Peterson J.D."/>
            <person name="Richardson D.L."/>
            <person name="Kerlavage A.R."/>
            <person name="Graham D.E."/>
            <person name="Kyrpides N.C."/>
            <person name="Fleischmann R.D."/>
            <person name="Quackenbush J."/>
            <person name="Lee N.H."/>
            <person name="Sutton G.G."/>
            <person name="Gill S.R."/>
            <person name="Kirkness E.F."/>
            <person name="Dougherty B.A."/>
            <person name="McKenney K."/>
            <person name="Adams M.D."/>
            <person name="Loftus B.J."/>
            <person name="Peterson S.N."/>
            <person name="Reich C.I."/>
            <person name="McNeil L.K."/>
            <person name="Badger J.H."/>
            <person name="Glodek A."/>
            <person name="Zhou L."/>
            <person name="Overbeek R."/>
            <person name="Gocayne J.D."/>
            <person name="Weidman J.F."/>
            <person name="McDonald L.A."/>
            <person name="Utterback T.R."/>
            <person name="Cotton M.D."/>
            <person name="Spriggs T."/>
            <person name="Artiach P."/>
            <person name="Kaine B.P."/>
            <person name="Sykes S.M."/>
            <person name="Sadow P.W."/>
            <person name="D'Andrea K.P."/>
            <person name="Bowman C."/>
            <person name="Fujii C."/>
            <person name="Garland S.A."/>
            <person name="Mason T.M."/>
            <person name="Olsen G.J."/>
            <person name="Fraser C.M."/>
            <person name="Smith H.O."/>
            <person name="Woese C.R."/>
            <person name="Venter J.C."/>
        </authorList>
    </citation>
    <scope>NUCLEOTIDE SEQUENCE [LARGE SCALE GENOMIC DNA]</scope>
    <source>
        <strain>ATCC 49558 / DSM 4304 / JCM 9628 / NBRC 100126 / VC-16</strain>
    </source>
</reference>
<comment type="subcellular location">
    <subcellularLocation>
        <location evidence="2">Cell membrane</location>
        <topology evidence="2">Multi-pass membrane protein</topology>
    </subcellularLocation>
</comment>
<proteinExistence type="predicted"/>
<accession>O29398</accession>
<feature type="chain" id="PRO_0000127936" description="Uncharacterized protein AF_0863">
    <location>
        <begin position="1"/>
        <end position="297"/>
    </location>
</feature>
<feature type="transmembrane region" description="Helical" evidence="1">
    <location>
        <begin position="26"/>
        <end position="48"/>
    </location>
</feature>
<feature type="transmembrane region" description="Helical" evidence="1">
    <location>
        <begin position="80"/>
        <end position="102"/>
    </location>
</feature>
<feature type="transmembrane region" description="Helical" evidence="1">
    <location>
        <begin position="134"/>
        <end position="156"/>
    </location>
</feature>
<feature type="transmembrane region" description="Helical" evidence="1">
    <location>
        <begin position="185"/>
        <end position="205"/>
    </location>
</feature>
<feature type="transmembrane region" description="Helical" evidence="1">
    <location>
        <begin position="225"/>
        <end position="247"/>
    </location>
</feature>
<feature type="transmembrane region" description="Helical" evidence="1">
    <location>
        <begin position="262"/>
        <end position="284"/>
    </location>
</feature>
<name>Y863_ARCFU</name>
<evidence type="ECO:0000255" key="1"/>
<evidence type="ECO:0000305" key="2"/>
<protein>
    <recommendedName>
        <fullName>Uncharacterized protein AF_0863</fullName>
    </recommendedName>
</protein>
<organism>
    <name type="scientific">Archaeoglobus fulgidus (strain ATCC 49558 / DSM 4304 / JCM 9628 / NBRC 100126 / VC-16)</name>
    <dbReference type="NCBI Taxonomy" id="224325"/>
    <lineage>
        <taxon>Archaea</taxon>
        <taxon>Methanobacteriati</taxon>
        <taxon>Methanobacteriota</taxon>
        <taxon>Archaeoglobi</taxon>
        <taxon>Archaeoglobales</taxon>
        <taxon>Archaeoglobaceae</taxon>
        <taxon>Archaeoglobus</taxon>
    </lineage>
</organism>
<dbReference type="EMBL" id="AE000782">
    <property type="protein sequence ID" value="AAB90377.1"/>
    <property type="molecule type" value="Genomic_DNA"/>
</dbReference>
<dbReference type="PIR" id="G69357">
    <property type="entry name" value="G69357"/>
</dbReference>
<dbReference type="RefSeq" id="WP_010878364.1">
    <property type="nucleotide sequence ID" value="NC_000917.1"/>
</dbReference>
<dbReference type="STRING" id="224325.AF_0863"/>
<dbReference type="PaxDb" id="224325-AF_0863"/>
<dbReference type="EnsemblBacteria" id="AAB90377">
    <property type="protein sequence ID" value="AAB90377"/>
    <property type="gene ID" value="AF_0863"/>
</dbReference>
<dbReference type="GeneID" id="1484083"/>
<dbReference type="KEGG" id="afu:AF_0863"/>
<dbReference type="eggNOG" id="arCOG04389">
    <property type="taxonomic scope" value="Archaea"/>
</dbReference>
<dbReference type="HOGENOM" id="CLU_923198_0_0_2"/>
<dbReference type="OrthoDB" id="137243at2157"/>
<dbReference type="Proteomes" id="UP000002199">
    <property type="component" value="Chromosome"/>
</dbReference>
<dbReference type="GO" id="GO:0005886">
    <property type="term" value="C:plasma membrane"/>
    <property type="evidence" value="ECO:0007669"/>
    <property type="project" value="UniProtKB-SubCell"/>
</dbReference>
<dbReference type="InterPro" id="IPR057169">
    <property type="entry name" value="DUF7847"/>
</dbReference>
<dbReference type="Pfam" id="PF25231">
    <property type="entry name" value="DUF7847"/>
    <property type="match status" value="1"/>
</dbReference>
<gene>
    <name type="ordered locus">AF_0863</name>
</gene>
<keyword id="KW-1003">Cell membrane</keyword>
<keyword id="KW-0472">Membrane</keyword>
<keyword id="KW-1185">Reference proteome</keyword>
<keyword id="KW-0812">Transmembrane</keyword>
<keyword id="KW-1133">Transmembrane helix</keyword>